<proteinExistence type="evidence at protein level"/>
<accession>P33679</accession>
<keyword id="KW-0002">3D-structure</keyword>
<keyword id="KW-0929">Antimicrobial</keyword>
<keyword id="KW-0903">Direct protein sequencing</keyword>
<keyword id="KW-1015">Disulfide bond</keyword>
<keyword id="KW-0295">Fungicide</keyword>
<keyword id="KW-0611">Plant defense</keyword>
<keyword id="KW-1185">Reference proteome</keyword>
<keyword id="KW-0732">Signal</keyword>
<gene>
    <name type="primary">Zlp</name>
</gene>
<reference key="1">
    <citation type="journal article" date="1994" name="Plant Physiol.">
        <title>Characterization and expression of an antifungal zeamatin-like protein (Zlp) gene from Zea mays.</title>
        <authorList>
            <person name="Malehorn D.E."/>
            <person name="Borgmeyer J.R."/>
            <person name="Smith C.E."/>
            <person name="Shah D.M."/>
        </authorList>
    </citation>
    <scope>NUCLEOTIDE SEQUENCE [MRNA]</scope>
    <source>
        <strain>cv. B73</strain>
        <tissue>Seed</tissue>
    </source>
</reference>
<reference key="2">
    <citation type="journal article" date="1990" name="J. Gen. Microbiol.">
        <title>Zeamatin, an antifungal protein from maize with membrane-permeabilizing activity.</title>
        <authorList>
            <person name="Roberts W.K."/>
            <person name="Selitrennikoff C.P."/>
        </authorList>
    </citation>
    <scope>PROTEIN SEQUENCE OF 21-48</scope>
</reference>
<reference key="3">
    <citation type="journal article" date="1996" name="Nat. Struct. Biol.">
        <title>The crystal structure of the antifungal protein zeamatin, a member of the thaumatin-like, PR-5 protein family.</title>
        <authorList>
            <person name="Batalia M.A."/>
            <person name="Monzingo A.F."/>
            <person name="Ernst S."/>
            <person name="Roberts W."/>
            <person name="Robertus J.D."/>
        </authorList>
    </citation>
    <scope>X-RAY CRYSTALLOGRAPHY (2.5 ANGSTROMS)</scope>
</reference>
<feature type="signal peptide" evidence="2">
    <location>
        <begin position="1"/>
        <end position="20"/>
    </location>
</feature>
<feature type="chain" id="PRO_0000034047" description="Zeamatin">
    <location>
        <begin position="21"/>
        <end position="227"/>
    </location>
</feature>
<feature type="disulfide bond">
    <location>
        <begin position="30"/>
        <end position="226"/>
    </location>
</feature>
<feature type="disulfide bond">
    <location>
        <begin position="72"/>
        <end position="82"/>
    </location>
</feature>
<feature type="disulfide bond">
    <location>
        <begin position="87"/>
        <end position="93"/>
    </location>
</feature>
<feature type="disulfide bond">
    <location>
        <begin position="139"/>
        <end position="215"/>
    </location>
</feature>
<feature type="disulfide bond">
    <location>
        <begin position="145"/>
        <end position="198"/>
    </location>
</feature>
<feature type="disulfide bond">
    <location>
        <begin position="153"/>
        <end position="163"/>
    </location>
</feature>
<feature type="disulfide bond">
    <location>
        <begin position="167"/>
        <end position="176"/>
    </location>
</feature>
<feature type="disulfide bond">
    <location>
        <begin position="177"/>
        <end position="185"/>
    </location>
</feature>
<feature type="strand" evidence="3">
    <location>
        <begin position="23"/>
        <end position="28"/>
    </location>
</feature>
<feature type="strand" evidence="3">
    <location>
        <begin position="30"/>
        <end position="32"/>
    </location>
</feature>
<feature type="strand" evidence="3">
    <location>
        <begin position="34"/>
        <end position="39"/>
    </location>
</feature>
<feature type="turn" evidence="3">
    <location>
        <begin position="40"/>
        <end position="42"/>
    </location>
</feature>
<feature type="strand" evidence="3">
    <location>
        <begin position="43"/>
        <end position="47"/>
    </location>
</feature>
<feature type="strand" evidence="3">
    <location>
        <begin position="52"/>
        <end position="56"/>
    </location>
</feature>
<feature type="strand" evidence="3">
    <location>
        <begin position="63"/>
        <end position="69"/>
    </location>
</feature>
<feature type="strand" evidence="3">
    <location>
        <begin position="71"/>
        <end position="74"/>
    </location>
</feature>
<feature type="strand" evidence="3">
    <location>
        <begin position="78"/>
        <end position="85"/>
    </location>
</feature>
<feature type="strand" evidence="3">
    <location>
        <begin position="90"/>
        <end position="92"/>
    </location>
</feature>
<feature type="strand" evidence="3">
    <location>
        <begin position="103"/>
        <end position="110"/>
    </location>
</feature>
<feature type="helix" evidence="3">
    <location>
        <begin position="111"/>
        <end position="113"/>
    </location>
</feature>
<feature type="strand" evidence="3">
    <location>
        <begin position="114"/>
        <end position="120"/>
    </location>
</feature>
<feature type="strand" evidence="3">
    <location>
        <begin position="129"/>
        <end position="133"/>
    </location>
</feature>
<feature type="strand" evidence="3">
    <location>
        <begin position="135"/>
        <end position="138"/>
    </location>
</feature>
<feature type="turn" evidence="3">
    <location>
        <begin position="149"/>
        <end position="152"/>
    </location>
</feature>
<feature type="helix" evidence="3">
    <location>
        <begin position="155"/>
        <end position="157"/>
    </location>
</feature>
<feature type="helix" evidence="3">
    <location>
        <begin position="166"/>
        <end position="170"/>
    </location>
</feature>
<feature type="helix" evidence="3">
    <location>
        <begin position="173"/>
        <end position="176"/>
    </location>
</feature>
<feature type="helix" evidence="3">
    <location>
        <begin position="179"/>
        <end position="184"/>
    </location>
</feature>
<feature type="helix" evidence="3">
    <location>
        <begin position="189"/>
        <end position="197"/>
    </location>
</feature>
<feature type="strand" evidence="3">
    <location>
        <begin position="201"/>
        <end position="204"/>
    </location>
</feature>
<feature type="helix" evidence="3">
    <location>
        <begin position="208"/>
        <end position="211"/>
    </location>
</feature>
<feature type="strand" evidence="3">
    <location>
        <begin position="213"/>
        <end position="216"/>
    </location>
</feature>
<feature type="strand" evidence="3">
    <location>
        <begin position="221"/>
        <end position="225"/>
    </location>
</feature>
<protein>
    <recommendedName>
        <fullName>Zeamatin</fullName>
    </recommendedName>
</protein>
<name>ZEAM_MAIZE</name>
<organism>
    <name type="scientific">Zea mays</name>
    <name type="common">Maize</name>
    <dbReference type="NCBI Taxonomy" id="4577"/>
    <lineage>
        <taxon>Eukaryota</taxon>
        <taxon>Viridiplantae</taxon>
        <taxon>Streptophyta</taxon>
        <taxon>Embryophyta</taxon>
        <taxon>Tracheophyta</taxon>
        <taxon>Spermatophyta</taxon>
        <taxon>Magnoliopsida</taxon>
        <taxon>Liliopsida</taxon>
        <taxon>Poales</taxon>
        <taxon>Poaceae</taxon>
        <taxon>PACMAD clade</taxon>
        <taxon>Panicoideae</taxon>
        <taxon>Andropogonodae</taxon>
        <taxon>Andropogoneae</taxon>
        <taxon>Tripsacinae</taxon>
        <taxon>Zea</taxon>
    </lineage>
</organism>
<evidence type="ECO:0000255" key="1">
    <source>
        <dbReference type="PROSITE-ProRule" id="PRU00699"/>
    </source>
</evidence>
<evidence type="ECO:0000269" key="2">
    <source ref="2"/>
</evidence>
<evidence type="ECO:0007829" key="3">
    <source>
        <dbReference type="PDB" id="1DU5"/>
    </source>
</evidence>
<comment type="function">
    <text>Has antifungal activity. Inhibits Candida albicans and Trichoderma reesei; marginal inhibition observed against Alternaria solani and Neurospora crassa.</text>
</comment>
<comment type="similarity">
    <text evidence="1">Belongs to the thaumatin family.</text>
</comment>
<dbReference type="EMBL" id="U06831">
    <property type="protein sequence ID" value="AAA92882.1"/>
    <property type="molecule type" value="mRNA"/>
</dbReference>
<dbReference type="PIR" id="JS0646">
    <property type="entry name" value="JS0646"/>
</dbReference>
<dbReference type="PIR" id="T02075">
    <property type="entry name" value="T02075"/>
</dbReference>
<dbReference type="RefSeq" id="NP_001105356.1">
    <property type="nucleotide sequence ID" value="NM_001111886.1"/>
</dbReference>
<dbReference type="PDB" id="1DU5">
    <property type="method" value="X-ray"/>
    <property type="resolution" value="2.50 A"/>
    <property type="chains" value="A/B=22-227"/>
</dbReference>
<dbReference type="PDBsum" id="1DU5"/>
<dbReference type="SMR" id="P33679"/>
<dbReference type="STRING" id="4577.P33679"/>
<dbReference type="PaxDb" id="4577-GRMZM2G374971_P01"/>
<dbReference type="EnsemblPlants" id="Zm00001eb325340_T001">
    <property type="protein sequence ID" value="Zm00001eb325340_P001"/>
    <property type="gene ID" value="Zm00001eb325340"/>
</dbReference>
<dbReference type="GeneID" id="542299"/>
<dbReference type="Gramene" id="Zm00001eb325340_T001">
    <property type="protein sequence ID" value="Zm00001eb325340_P001"/>
    <property type="gene ID" value="Zm00001eb325340"/>
</dbReference>
<dbReference type="KEGG" id="zma:542299"/>
<dbReference type="MaizeGDB" id="78797"/>
<dbReference type="eggNOG" id="ENOG502QV4N">
    <property type="taxonomic scope" value="Eukaryota"/>
</dbReference>
<dbReference type="HOGENOM" id="CLU_043181_5_0_1"/>
<dbReference type="InParanoid" id="P33679"/>
<dbReference type="OMA" id="DIRNNCA"/>
<dbReference type="OrthoDB" id="430315at2759"/>
<dbReference type="EvolutionaryTrace" id="P33679"/>
<dbReference type="Proteomes" id="UP000007305">
    <property type="component" value="Chromosome 7"/>
</dbReference>
<dbReference type="ExpressionAtlas" id="P33679">
    <property type="expression patterns" value="baseline and differential"/>
</dbReference>
<dbReference type="GO" id="GO:0006952">
    <property type="term" value="P:defense response"/>
    <property type="evidence" value="ECO:0000318"/>
    <property type="project" value="GO_Central"/>
</dbReference>
<dbReference type="GO" id="GO:0050832">
    <property type="term" value="P:defense response to fungus"/>
    <property type="evidence" value="ECO:0000314"/>
    <property type="project" value="AgBase"/>
</dbReference>
<dbReference type="GO" id="GO:0031640">
    <property type="term" value="P:killing of cells of another organism"/>
    <property type="evidence" value="ECO:0007669"/>
    <property type="project" value="UniProtKB-KW"/>
</dbReference>
<dbReference type="FunFam" id="2.60.110.10:FF:000003">
    <property type="entry name" value="Thaumatin I"/>
    <property type="match status" value="1"/>
</dbReference>
<dbReference type="Gene3D" id="2.60.110.10">
    <property type="entry name" value="Thaumatin"/>
    <property type="match status" value="1"/>
</dbReference>
<dbReference type="InterPro" id="IPR037176">
    <property type="entry name" value="Osmotin/thaumatin-like_sf"/>
</dbReference>
<dbReference type="InterPro" id="IPR001938">
    <property type="entry name" value="Thaumatin"/>
</dbReference>
<dbReference type="InterPro" id="IPR017949">
    <property type="entry name" value="Thaumatin_CS"/>
</dbReference>
<dbReference type="PANTHER" id="PTHR31048">
    <property type="entry name" value="OS03G0233200 PROTEIN"/>
    <property type="match status" value="1"/>
</dbReference>
<dbReference type="Pfam" id="PF00314">
    <property type="entry name" value="Thaumatin"/>
    <property type="match status" value="1"/>
</dbReference>
<dbReference type="PIRSF" id="PIRSF002703">
    <property type="entry name" value="Thaumatin"/>
    <property type="match status" value="1"/>
</dbReference>
<dbReference type="PRINTS" id="PR00347">
    <property type="entry name" value="THAUMATIN"/>
</dbReference>
<dbReference type="SMART" id="SM00205">
    <property type="entry name" value="THN"/>
    <property type="match status" value="1"/>
</dbReference>
<dbReference type="SUPFAM" id="SSF49870">
    <property type="entry name" value="Osmotin, thaumatin-like protein"/>
    <property type="match status" value="1"/>
</dbReference>
<dbReference type="PROSITE" id="PS00316">
    <property type="entry name" value="THAUMATIN_1"/>
    <property type="match status" value="1"/>
</dbReference>
<dbReference type="PROSITE" id="PS51367">
    <property type="entry name" value="THAUMATIN_2"/>
    <property type="match status" value="1"/>
</dbReference>
<sequence>MAGSVAIVGIFVALLAVAGEAAVFTVVNQCPFTVWAASVPVGGGRQLNRGESWRITAPAGTTAARIWARTGCKFDASGRGSCRTGDCGGVLQCTGYGRAPNTLAEYALKQFNNLDFFDISLIDGFNVPMSFLPDGGSGCSRGPRCAVDVNARCPAELRQDGVCNNACPVFKKDEYCCVGSAANDCHPTNYSRYFKGQCPDAYSYPKDDATSTFTCPAGTNYKVVFCP</sequence>